<reference key="1">
    <citation type="journal article" date="2003" name="Nature">
        <title>The genome sequence of Bacillus anthracis Ames and comparison to closely related bacteria.</title>
        <authorList>
            <person name="Read T.D."/>
            <person name="Peterson S.N."/>
            <person name="Tourasse N.J."/>
            <person name="Baillie L.W."/>
            <person name="Paulsen I.T."/>
            <person name="Nelson K.E."/>
            <person name="Tettelin H."/>
            <person name="Fouts D.E."/>
            <person name="Eisen J.A."/>
            <person name="Gill S.R."/>
            <person name="Holtzapple E.K."/>
            <person name="Okstad O.A."/>
            <person name="Helgason E."/>
            <person name="Rilstone J."/>
            <person name="Wu M."/>
            <person name="Kolonay J.F."/>
            <person name="Beanan M.J."/>
            <person name="Dodson R.J."/>
            <person name="Brinkac L.M."/>
            <person name="Gwinn M.L."/>
            <person name="DeBoy R.T."/>
            <person name="Madpu R."/>
            <person name="Daugherty S.C."/>
            <person name="Durkin A.S."/>
            <person name="Haft D.H."/>
            <person name="Nelson W.C."/>
            <person name="Peterson J.D."/>
            <person name="Pop M."/>
            <person name="Khouri H.M."/>
            <person name="Radune D."/>
            <person name="Benton J.L."/>
            <person name="Mahamoud Y."/>
            <person name="Jiang L."/>
            <person name="Hance I.R."/>
            <person name="Weidman J.F."/>
            <person name="Berry K.J."/>
            <person name="Plaut R.D."/>
            <person name="Wolf A.M."/>
            <person name="Watkins K.L."/>
            <person name="Nierman W.C."/>
            <person name="Hazen A."/>
            <person name="Cline R.T."/>
            <person name="Redmond C."/>
            <person name="Thwaite J.E."/>
            <person name="White O."/>
            <person name="Salzberg S.L."/>
            <person name="Thomason B."/>
            <person name="Friedlander A.M."/>
            <person name="Koehler T.M."/>
            <person name="Hanna P.C."/>
            <person name="Kolstoe A.-B."/>
            <person name="Fraser C.M."/>
        </authorList>
    </citation>
    <scope>NUCLEOTIDE SEQUENCE [LARGE SCALE GENOMIC DNA]</scope>
    <source>
        <strain>Ames / isolate Porton</strain>
    </source>
</reference>
<reference key="2">
    <citation type="journal article" date="2009" name="J. Bacteriol.">
        <title>The complete genome sequence of Bacillus anthracis Ames 'Ancestor'.</title>
        <authorList>
            <person name="Ravel J."/>
            <person name="Jiang L."/>
            <person name="Stanley S.T."/>
            <person name="Wilson M.R."/>
            <person name="Decker R.S."/>
            <person name="Read T.D."/>
            <person name="Worsham P."/>
            <person name="Keim P.S."/>
            <person name="Salzberg S.L."/>
            <person name="Fraser-Liggett C.M."/>
            <person name="Rasko D.A."/>
        </authorList>
    </citation>
    <scope>NUCLEOTIDE SEQUENCE [LARGE SCALE GENOMIC DNA]</scope>
    <source>
        <strain>Ames ancestor</strain>
    </source>
</reference>
<reference key="3">
    <citation type="submission" date="2004-01" db="EMBL/GenBank/DDBJ databases">
        <title>Complete genome sequence of Bacillus anthracis Sterne.</title>
        <authorList>
            <person name="Brettin T.S."/>
            <person name="Bruce D."/>
            <person name="Challacombe J.F."/>
            <person name="Gilna P."/>
            <person name="Han C."/>
            <person name="Hill K."/>
            <person name="Hitchcock P."/>
            <person name="Jackson P."/>
            <person name="Keim P."/>
            <person name="Longmire J."/>
            <person name="Lucas S."/>
            <person name="Okinaka R."/>
            <person name="Richardson P."/>
            <person name="Rubin E."/>
            <person name="Tice H."/>
        </authorList>
    </citation>
    <scope>NUCLEOTIDE SEQUENCE [LARGE SCALE GENOMIC DNA]</scope>
    <source>
        <strain>Sterne</strain>
    </source>
</reference>
<feature type="chain" id="PRO_0000156366" description="UPF0173 metal-dependent hydrolase BA_4860/GBAA_4860/BAS4507">
    <location>
        <begin position="1"/>
        <end position="227"/>
    </location>
</feature>
<comment type="similarity">
    <text evidence="1">Belongs to the UPF0173 family.</text>
</comment>
<dbReference type="EMBL" id="AE016879">
    <property type="protein sequence ID" value="AAP28547.1"/>
    <property type="molecule type" value="Genomic_DNA"/>
</dbReference>
<dbReference type="EMBL" id="AE017334">
    <property type="protein sequence ID" value="AAT33978.1"/>
    <property type="molecule type" value="Genomic_DNA"/>
</dbReference>
<dbReference type="EMBL" id="AE017225">
    <property type="protein sequence ID" value="AAT56805.1"/>
    <property type="molecule type" value="Genomic_DNA"/>
</dbReference>
<dbReference type="RefSeq" id="NP_847061.1">
    <property type="nucleotide sequence ID" value="NC_003997.3"/>
</dbReference>
<dbReference type="RefSeq" id="WP_000868940.1">
    <property type="nucleotide sequence ID" value="NZ_WXXJ01000026.1"/>
</dbReference>
<dbReference type="RefSeq" id="YP_030755.1">
    <property type="nucleotide sequence ID" value="NC_005945.1"/>
</dbReference>
<dbReference type="SMR" id="Q81KX6"/>
<dbReference type="STRING" id="261594.GBAA_4860"/>
<dbReference type="DNASU" id="1084016"/>
<dbReference type="GeneID" id="45024483"/>
<dbReference type="KEGG" id="ban:BA_4860"/>
<dbReference type="KEGG" id="banh:HYU01_23680"/>
<dbReference type="KEGG" id="bar:GBAA_4860"/>
<dbReference type="KEGG" id="bat:BAS4507"/>
<dbReference type="PATRIC" id="fig|198094.11.peg.4820"/>
<dbReference type="eggNOG" id="COG2220">
    <property type="taxonomic scope" value="Bacteria"/>
</dbReference>
<dbReference type="HOGENOM" id="CLU_070010_4_1_9"/>
<dbReference type="OMA" id="MHYNTWP"/>
<dbReference type="OrthoDB" id="9789133at2"/>
<dbReference type="Proteomes" id="UP000000427">
    <property type="component" value="Chromosome"/>
</dbReference>
<dbReference type="Proteomes" id="UP000000594">
    <property type="component" value="Chromosome"/>
</dbReference>
<dbReference type="GO" id="GO:0016787">
    <property type="term" value="F:hydrolase activity"/>
    <property type="evidence" value="ECO:0007669"/>
    <property type="project" value="UniProtKB-UniRule"/>
</dbReference>
<dbReference type="Gene3D" id="3.60.15.10">
    <property type="entry name" value="Ribonuclease Z/Hydroxyacylglutathione hydrolase-like"/>
    <property type="match status" value="1"/>
</dbReference>
<dbReference type="HAMAP" id="MF_00457">
    <property type="entry name" value="UPF0173"/>
    <property type="match status" value="1"/>
</dbReference>
<dbReference type="InterPro" id="IPR001279">
    <property type="entry name" value="Metallo-B-lactamas"/>
</dbReference>
<dbReference type="InterPro" id="IPR036866">
    <property type="entry name" value="RibonucZ/Hydroxyglut_hydro"/>
</dbReference>
<dbReference type="InterPro" id="IPR022877">
    <property type="entry name" value="UPF0173"/>
</dbReference>
<dbReference type="InterPro" id="IPR050114">
    <property type="entry name" value="UPF0173_UPF0282_UlaG_hydrolase"/>
</dbReference>
<dbReference type="NCBIfam" id="NF001911">
    <property type="entry name" value="PRK00685.1"/>
    <property type="match status" value="1"/>
</dbReference>
<dbReference type="PANTHER" id="PTHR43546:SF3">
    <property type="entry name" value="UPF0173 METAL-DEPENDENT HYDROLASE MJ1163"/>
    <property type="match status" value="1"/>
</dbReference>
<dbReference type="PANTHER" id="PTHR43546">
    <property type="entry name" value="UPF0173 METAL-DEPENDENT HYDROLASE MJ1163-RELATED"/>
    <property type="match status" value="1"/>
</dbReference>
<dbReference type="Pfam" id="PF12706">
    <property type="entry name" value="Lactamase_B_2"/>
    <property type="match status" value="1"/>
</dbReference>
<dbReference type="SMART" id="SM00849">
    <property type="entry name" value="Lactamase_B"/>
    <property type="match status" value="1"/>
</dbReference>
<dbReference type="SUPFAM" id="SSF56281">
    <property type="entry name" value="Metallo-hydrolase/oxidoreductase"/>
    <property type="match status" value="1"/>
</dbReference>
<accession>Q81KX6</accession>
<accession>Q6HSD3</accession>
<accession>Q6KLM8</accession>
<name>Y4860_BACAN</name>
<proteinExistence type="inferred from homology"/>
<keyword id="KW-0378">Hydrolase</keyword>
<keyword id="KW-1185">Reference proteome</keyword>
<protein>
    <recommendedName>
        <fullName evidence="1">UPF0173 metal-dependent hydrolase BA_4860/GBAA_4860/BAS4507</fullName>
    </recommendedName>
</protein>
<gene>
    <name type="ordered locus">BA_4860</name>
    <name type="ordered locus">GBAA_4860</name>
    <name type="ordered locus">BAS4507</name>
</gene>
<organism>
    <name type="scientific">Bacillus anthracis</name>
    <dbReference type="NCBI Taxonomy" id="1392"/>
    <lineage>
        <taxon>Bacteria</taxon>
        <taxon>Bacillati</taxon>
        <taxon>Bacillota</taxon>
        <taxon>Bacilli</taxon>
        <taxon>Bacillales</taxon>
        <taxon>Bacillaceae</taxon>
        <taxon>Bacillus</taxon>
        <taxon>Bacillus cereus group</taxon>
    </lineage>
</organism>
<evidence type="ECO:0000255" key="1">
    <source>
        <dbReference type="HAMAP-Rule" id="MF_00457"/>
    </source>
</evidence>
<sequence length="227" mass="24889">MKVSYHGHSVVKIETNGKVILIDPFLTGNPKTDLKAEDVKVDAILLSHGHGDHVGDTVELAKKNNAVVVAPFELATFLSWQGVNTHPMHIGGSHEFDFGKVKFTQAFHGSSYIDEENKTITYTGMPAGILFTAEEKTLYHAGDTALFSDMKLIGELNNIDVAFLPIGDNFTMGPEDAVLAAKWVQAKTVVPMHYNTFPVIEQDPYQFVEKLQNCTGKVLEAGESITL</sequence>